<comment type="function">
    <text evidence="2">Component of the large ribosomal subunit. The ribosome is a large ribonucleoprotein complex responsible for the synthesis of proteins in the cell.</text>
</comment>
<comment type="subunit">
    <text evidence="2">Component of the large ribosomal subunit.</text>
</comment>
<comment type="subcellular location">
    <subcellularLocation>
        <location evidence="2">Cytoplasm</location>
    </subcellularLocation>
</comment>
<comment type="similarity">
    <text evidence="3">Belongs to the eukaryotic ribosomal protein eL15 family.</text>
</comment>
<sequence length="204" mass="24060">MGAYRYMQKLWRKKQSDVMRFLLRVRCWQYRQLSALHRAPRPTRPDKARRLGYKAKQGYVIYRVRVRRGGRKRPVPKGATYGKPVHHGVNQIKFARSLQSVAEERAGRHCGGLRVLSSYWVGEDSTYKFFEVILVDIFHKAIRRNPDTQWITKAVHKHREMRGLTSAGKKSRGLGKGHKFHLTIGGSRRAAWRRRNTLQLHRYR</sequence>
<proteinExistence type="evidence at transcript level"/>
<evidence type="ECO:0000250" key="1"/>
<evidence type="ECO:0000250" key="2">
    <source>
        <dbReference type="UniProtKB" id="P61313"/>
    </source>
</evidence>
<evidence type="ECO:0000305" key="3"/>
<name>RL15_TACFU</name>
<organism>
    <name type="scientific">Tachysurus fulvidraco</name>
    <name type="common">Yellow catfish</name>
    <name type="synonym">Pimelodus fulvidraco</name>
    <dbReference type="NCBI Taxonomy" id="1234273"/>
    <lineage>
        <taxon>Eukaryota</taxon>
        <taxon>Metazoa</taxon>
        <taxon>Chordata</taxon>
        <taxon>Craniata</taxon>
        <taxon>Vertebrata</taxon>
        <taxon>Euteleostomi</taxon>
        <taxon>Actinopterygii</taxon>
        <taxon>Neopterygii</taxon>
        <taxon>Teleostei</taxon>
        <taxon>Ostariophysi</taxon>
        <taxon>Siluriformes</taxon>
        <taxon>Bagridae</taxon>
        <taxon>Tachysurus</taxon>
    </lineage>
</organism>
<feature type="initiator methionine" description="Removed" evidence="1">
    <location>
        <position position="1"/>
    </location>
</feature>
<feature type="chain" id="PRO_0000127545" description="Large ribosomal subunit protein eL15">
    <location>
        <begin position="2"/>
        <end position="204"/>
    </location>
</feature>
<protein>
    <recommendedName>
        <fullName evidence="3">Large ribosomal subunit protein eL15</fullName>
    </recommendedName>
    <alternativeName>
        <fullName>60S ribosomal protein L15</fullName>
    </alternativeName>
</protein>
<reference key="1">
    <citation type="submission" date="2003-03" db="EMBL/GenBank/DDBJ databases">
        <title>Evaluating the potential of ribosomal protein L15 as a novel marker for phylogenetic analysis: a comparative analysis of 15 teleost RPL15 cDNAs.</title>
        <authorList>
            <person name="Song P."/>
            <person name="Zhang J."/>
            <person name="Xiang Z."/>
        </authorList>
    </citation>
    <scope>NUCLEOTIDE SEQUENCE [MRNA]</scope>
    <source>
        <tissue>Liver</tissue>
    </source>
</reference>
<keyword id="KW-0963">Cytoplasm</keyword>
<keyword id="KW-0687">Ribonucleoprotein</keyword>
<keyword id="KW-0689">Ribosomal protein</keyword>
<gene>
    <name type="primary">rpl15</name>
</gene>
<dbReference type="EMBL" id="AY249423">
    <property type="protein sequence ID" value="AAP35260.1"/>
    <property type="molecule type" value="mRNA"/>
</dbReference>
<dbReference type="SMR" id="Q7T2N5"/>
<dbReference type="GO" id="GO:0022625">
    <property type="term" value="C:cytosolic large ribosomal subunit"/>
    <property type="evidence" value="ECO:0007669"/>
    <property type="project" value="TreeGrafter"/>
</dbReference>
<dbReference type="GO" id="GO:0003723">
    <property type="term" value="F:RNA binding"/>
    <property type="evidence" value="ECO:0007669"/>
    <property type="project" value="TreeGrafter"/>
</dbReference>
<dbReference type="GO" id="GO:0003735">
    <property type="term" value="F:structural constituent of ribosome"/>
    <property type="evidence" value="ECO:0007669"/>
    <property type="project" value="InterPro"/>
</dbReference>
<dbReference type="GO" id="GO:0002181">
    <property type="term" value="P:cytoplasmic translation"/>
    <property type="evidence" value="ECO:0007669"/>
    <property type="project" value="TreeGrafter"/>
</dbReference>
<dbReference type="FunFam" id="3.40.1120.10:FF:000001">
    <property type="entry name" value="Ribosomal protein L15"/>
    <property type="match status" value="1"/>
</dbReference>
<dbReference type="Gene3D" id="3.40.1120.10">
    <property type="entry name" value="Ribosomal protein l15e"/>
    <property type="match status" value="1"/>
</dbReference>
<dbReference type="InterPro" id="IPR024794">
    <property type="entry name" value="Rbsml_eL15_core_dom_sf"/>
</dbReference>
<dbReference type="InterPro" id="IPR000439">
    <property type="entry name" value="Ribosomal_eL15"/>
</dbReference>
<dbReference type="InterPro" id="IPR020925">
    <property type="entry name" value="Ribosomal_eL15_CS"/>
</dbReference>
<dbReference type="InterPro" id="IPR012678">
    <property type="entry name" value="Ribosomal_uL23/eL15/eS24_sf"/>
</dbReference>
<dbReference type="NCBIfam" id="NF003269">
    <property type="entry name" value="PRK04243.1"/>
    <property type="match status" value="1"/>
</dbReference>
<dbReference type="PANTHER" id="PTHR11847:SF4">
    <property type="entry name" value="LARGE RIBOSOMAL SUBUNIT PROTEIN EL15"/>
    <property type="match status" value="1"/>
</dbReference>
<dbReference type="PANTHER" id="PTHR11847">
    <property type="entry name" value="RIBOSOMAL PROTEIN L15"/>
    <property type="match status" value="1"/>
</dbReference>
<dbReference type="Pfam" id="PF00827">
    <property type="entry name" value="Ribosomal_L15e"/>
    <property type="match status" value="1"/>
</dbReference>
<dbReference type="SMART" id="SM01384">
    <property type="entry name" value="Ribosomal_L15e"/>
    <property type="match status" value="1"/>
</dbReference>
<dbReference type="SUPFAM" id="SSF54189">
    <property type="entry name" value="Ribosomal proteins S24e, L23 and L15e"/>
    <property type="match status" value="1"/>
</dbReference>
<dbReference type="PROSITE" id="PS01194">
    <property type="entry name" value="RIBOSOMAL_L15E"/>
    <property type="match status" value="1"/>
</dbReference>
<accession>Q7T2N5</accession>